<reference key="1">
    <citation type="journal article" date="1999" name="Nature">
        <title>Genomic sequence comparison of two unrelated isolates of the human gastric pathogen Helicobacter pylori.</title>
        <authorList>
            <person name="Alm R.A."/>
            <person name="Ling L.-S.L."/>
            <person name="Moir D.T."/>
            <person name="King B.L."/>
            <person name="Brown E.D."/>
            <person name="Doig P.C."/>
            <person name="Smith D.R."/>
            <person name="Noonan B."/>
            <person name="Guild B.C."/>
            <person name="deJonge B.L."/>
            <person name="Carmel G."/>
            <person name="Tummino P.J."/>
            <person name="Caruso A."/>
            <person name="Uria-Nickelsen M."/>
            <person name="Mills D.M."/>
            <person name="Ives C."/>
            <person name="Gibson R."/>
            <person name="Merberg D."/>
            <person name="Mills S.D."/>
            <person name="Jiang Q."/>
            <person name="Taylor D.E."/>
            <person name="Vovis G.F."/>
            <person name="Trust T.J."/>
        </authorList>
    </citation>
    <scope>NUCLEOTIDE SEQUENCE [LARGE SCALE GENOMIC DNA]</scope>
    <source>
        <strain>J99 / ATCC 700824</strain>
    </source>
</reference>
<dbReference type="EC" id="2.6.1.42"/>
<dbReference type="EMBL" id="AE001439">
    <property type="protein sequence ID" value="AAD06942.1"/>
    <property type="molecule type" value="Genomic_DNA"/>
</dbReference>
<dbReference type="PIR" id="D71816">
    <property type="entry name" value="D71816"/>
</dbReference>
<dbReference type="RefSeq" id="WP_001133133.1">
    <property type="nucleotide sequence ID" value="NC_000921.1"/>
</dbReference>
<dbReference type="SMR" id="Q9ZJF1"/>
<dbReference type="KEGG" id="hpj:jhp_1361"/>
<dbReference type="PATRIC" id="fig|85963.30.peg.1190"/>
<dbReference type="eggNOG" id="COG0115">
    <property type="taxonomic scope" value="Bacteria"/>
</dbReference>
<dbReference type="UniPathway" id="UPA00047">
    <property type="reaction ID" value="UER00058"/>
</dbReference>
<dbReference type="UniPathway" id="UPA00048">
    <property type="reaction ID" value="UER00073"/>
</dbReference>
<dbReference type="UniPathway" id="UPA00049">
    <property type="reaction ID" value="UER00062"/>
</dbReference>
<dbReference type="Proteomes" id="UP000000804">
    <property type="component" value="Chromosome"/>
</dbReference>
<dbReference type="GO" id="GO:0052656">
    <property type="term" value="F:L-isoleucine-2-oxoglutarate transaminase activity"/>
    <property type="evidence" value="ECO:0007669"/>
    <property type="project" value="RHEA"/>
</dbReference>
<dbReference type="GO" id="GO:0052654">
    <property type="term" value="F:L-leucine-2-oxoglutarate transaminase activity"/>
    <property type="evidence" value="ECO:0007669"/>
    <property type="project" value="RHEA"/>
</dbReference>
<dbReference type="GO" id="GO:0052655">
    <property type="term" value="F:L-valine-2-oxoglutarate transaminase activity"/>
    <property type="evidence" value="ECO:0007669"/>
    <property type="project" value="RHEA"/>
</dbReference>
<dbReference type="GO" id="GO:0009097">
    <property type="term" value="P:isoleucine biosynthetic process"/>
    <property type="evidence" value="ECO:0007669"/>
    <property type="project" value="UniProtKB-UniPathway"/>
</dbReference>
<dbReference type="GO" id="GO:0009098">
    <property type="term" value="P:L-leucine biosynthetic process"/>
    <property type="evidence" value="ECO:0007669"/>
    <property type="project" value="UniProtKB-UniPathway"/>
</dbReference>
<dbReference type="GO" id="GO:0009099">
    <property type="term" value="P:L-valine biosynthetic process"/>
    <property type="evidence" value="ECO:0007669"/>
    <property type="project" value="UniProtKB-UniPathway"/>
</dbReference>
<dbReference type="CDD" id="cd01557">
    <property type="entry name" value="BCAT_beta_family"/>
    <property type="match status" value="1"/>
</dbReference>
<dbReference type="FunFam" id="3.20.10.10:FF:000006">
    <property type="entry name" value="Branched-chain amino acid aminotransferase"/>
    <property type="match status" value="1"/>
</dbReference>
<dbReference type="FunFam" id="3.30.470.10:FF:000004">
    <property type="entry name" value="Branched-chain-amino-acid aminotransferase"/>
    <property type="match status" value="1"/>
</dbReference>
<dbReference type="Gene3D" id="3.30.470.10">
    <property type="match status" value="1"/>
</dbReference>
<dbReference type="Gene3D" id="3.20.10.10">
    <property type="entry name" value="D-amino Acid Aminotransferase, subunit A, domain 2"/>
    <property type="match status" value="1"/>
</dbReference>
<dbReference type="InterPro" id="IPR001544">
    <property type="entry name" value="Aminotrans_IV"/>
</dbReference>
<dbReference type="InterPro" id="IPR018300">
    <property type="entry name" value="Aminotrans_IV_CS"/>
</dbReference>
<dbReference type="InterPro" id="IPR036038">
    <property type="entry name" value="Aminotransferase-like"/>
</dbReference>
<dbReference type="InterPro" id="IPR005786">
    <property type="entry name" value="B_amino_transII"/>
</dbReference>
<dbReference type="InterPro" id="IPR043132">
    <property type="entry name" value="BCAT-like_C"/>
</dbReference>
<dbReference type="InterPro" id="IPR043131">
    <property type="entry name" value="BCAT-like_N"/>
</dbReference>
<dbReference type="InterPro" id="IPR033939">
    <property type="entry name" value="BCAT_family"/>
</dbReference>
<dbReference type="NCBIfam" id="TIGR01123">
    <property type="entry name" value="ilvE_II"/>
    <property type="match status" value="1"/>
</dbReference>
<dbReference type="NCBIfam" id="NF009897">
    <property type="entry name" value="PRK13357.1"/>
    <property type="match status" value="1"/>
</dbReference>
<dbReference type="PANTHER" id="PTHR42825">
    <property type="entry name" value="AMINO ACID AMINOTRANSFERASE"/>
    <property type="match status" value="1"/>
</dbReference>
<dbReference type="PANTHER" id="PTHR42825:SF2">
    <property type="entry name" value="BRANCHED-CHAIN-AMINO-ACID AMINOTRANSFERASE 3, CHLOROPLASTIC-RELATED"/>
    <property type="match status" value="1"/>
</dbReference>
<dbReference type="Pfam" id="PF01063">
    <property type="entry name" value="Aminotran_4"/>
    <property type="match status" value="1"/>
</dbReference>
<dbReference type="PIRSF" id="PIRSF006468">
    <property type="entry name" value="BCAT1"/>
    <property type="match status" value="1"/>
</dbReference>
<dbReference type="SUPFAM" id="SSF56752">
    <property type="entry name" value="D-aminoacid aminotransferase-like PLP-dependent enzymes"/>
    <property type="match status" value="1"/>
</dbReference>
<dbReference type="PROSITE" id="PS00770">
    <property type="entry name" value="AA_TRANSFER_CLASS_4"/>
    <property type="match status" value="1"/>
</dbReference>
<protein>
    <recommendedName>
        <fullName>Branched-chain-amino-acid aminotransferase</fullName>
        <shortName>BCAT</shortName>
        <ecNumber>2.6.1.42</ecNumber>
    </recommendedName>
</protein>
<sequence length="340" mass="37365">MPNLENLDWKNLGFSYIKTDFRFIATYKNGSWSQGELVSENALQLSEGSPVLHYGQACFEGLKAYRSQKGKALLFRPLENAKRLQTSCERLLMPKVSEELFLKACAEVIKANQKWLAPYKSGASLYLRPFVIGVGDNLGVKPASEYLFIVFCAPVGAYFKGGIEKGGARFITTAFDRAAPKGTGGVKVGGNYAASLLAHKIATEQGYDDCIYLDPTTHTKIEEVGAANFFGITHDDAFITPHSPSILPSVTRKSLMVLAKEHLKLKVEEREILIDELGAFKEAGACGTAAIITPIKEIAHNNKSYSFEAPGNITKQLYDLLLSIQQGEQEAPKDWIFEVG</sequence>
<gene>
    <name type="primary">ilvE</name>
    <name type="ordered locus">jhp_1361</name>
</gene>
<accession>Q9ZJF1</accession>
<evidence type="ECO:0000250" key="1"/>
<evidence type="ECO:0000305" key="2"/>
<organism>
    <name type="scientific">Helicobacter pylori (strain J99 / ATCC 700824)</name>
    <name type="common">Campylobacter pylori J99</name>
    <dbReference type="NCBI Taxonomy" id="85963"/>
    <lineage>
        <taxon>Bacteria</taxon>
        <taxon>Pseudomonadati</taxon>
        <taxon>Campylobacterota</taxon>
        <taxon>Epsilonproteobacteria</taxon>
        <taxon>Campylobacterales</taxon>
        <taxon>Helicobacteraceae</taxon>
        <taxon>Helicobacter</taxon>
    </lineage>
</organism>
<keyword id="KW-0028">Amino-acid biosynthesis</keyword>
<keyword id="KW-0032">Aminotransferase</keyword>
<keyword id="KW-0100">Branched-chain amino acid biosynthesis</keyword>
<keyword id="KW-0663">Pyridoxal phosphate</keyword>
<keyword id="KW-0808">Transferase</keyword>
<name>ILVE_HELPJ</name>
<feature type="chain" id="PRO_0000103269" description="Branched-chain-amino-acid aminotransferase">
    <location>
        <begin position="1"/>
        <end position="340"/>
    </location>
</feature>
<feature type="modified residue" description="N6-(pyridoxal phosphate)lysine" evidence="1">
    <location>
        <position position="187"/>
    </location>
</feature>
<comment type="function">
    <text evidence="1">Acts on leucine, isoleucine and valine.</text>
</comment>
<comment type="catalytic activity">
    <reaction>
        <text>L-leucine + 2-oxoglutarate = 4-methyl-2-oxopentanoate + L-glutamate</text>
        <dbReference type="Rhea" id="RHEA:18321"/>
        <dbReference type="ChEBI" id="CHEBI:16810"/>
        <dbReference type="ChEBI" id="CHEBI:17865"/>
        <dbReference type="ChEBI" id="CHEBI:29985"/>
        <dbReference type="ChEBI" id="CHEBI:57427"/>
        <dbReference type="EC" id="2.6.1.42"/>
    </reaction>
</comment>
<comment type="catalytic activity">
    <reaction>
        <text>L-isoleucine + 2-oxoglutarate = (S)-3-methyl-2-oxopentanoate + L-glutamate</text>
        <dbReference type="Rhea" id="RHEA:24801"/>
        <dbReference type="ChEBI" id="CHEBI:16810"/>
        <dbReference type="ChEBI" id="CHEBI:29985"/>
        <dbReference type="ChEBI" id="CHEBI:35146"/>
        <dbReference type="ChEBI" id="CHEBI:58045"/>
        <dbReference type="EC" id="2.6.1.42"/>
    </reaction>
</comment>
<comment type="catalytic activity">
    <reaction>
        <text>L-valine + 2-oxoglutarate = 3-methyl-2-oxobutanoate + L-glutamate</text>
        <dbReference type="Rhea" id="RHEA:24813"/>
        <dbReference type="ChEBI" id="CHEBI:11851"/>
        <dbReference type="ChEBI" id="CHEBI:16810"/>
        <dbReference type="ChEBI" id="CHEBI:29985"/>
        <dbReference type="ChEBI" id="CHEBI:57762"/>
        <dbReference type="EC" id="2.6.1.42"/>
    </reaction>
</comment>
<comment type="cofactor">
    <cofactor>
        <name>pyridoxal 5'-phosphate</name>
        <dbReference type="ChEBI" id="CHEBI:597326"/>
    </cofactor>
</comment>
<comment type="pathway">
    <text>Amino-acid biosynthesis; L-isoleucine biosynthesis; L-isoleucine from 2-oxobutanoate: step 4/4.</text>
</comment>
<comment type="pathway">
    <text>Amino-acid biosynthesis; L-leucine biosynthesis; L-leucine from 3-methyl-2-oxobutanoate: step 4/4.</text>
</comment>
<comment type="pathway">
    <text>Amino-acid biosynthesis; L-valine biosynthesis; L-valine from pyruvate: step 4/4.</text>
</comment>
<comment type="similarity">
    <text evidence="2">Belongs to the class-IV pyridoxal-phosphate-dependent aminotransferase family.</text>
</comment>
<proteinExistence type="inferred from homology"/>